<proteinExistence type="inferred from homology"/>
<keyword id="KW-0479">Metal-binding</keyword>
<keyword id="KW-0500">Molybdenum</keyword>
<keyword id="KW-0560">Oxidoreductase</keyword>
<keyword id="KW-0574">Periplasm</keyword>
<keyword id="KW-1185">Reference proteome</keyword>
<keyword id="KW-0732">Signal</keyword>
<name>MSRP_ECO24</name>
<dbReference type="EC" id="1.8.5.-" evidence="1"/>
<dbReference type="EMBL" id="CP000800">
    <property type="protein sequence ID" value="ABV19552.1"/>
    <property type="molecule type" value="Genomic_DNA"/>
</dbReference>
<dbReference type="RefSeq" id="WP_000730130.1">
    <property type="nucleotide sequence ID" value="NC_009801.1"/>
</dbReference>
<dbReference type="SMR" id="A7ZN92"/>
<dbReference type="KEGG" id="ecw:EcE24377A_2202"/>
<dbReference type="HOGENOM" id="CLU_045520_0_0_6"/>
<dbReference type="Proteomes" id="UP000001122">
    <property type="component" value="Chromosome"/>
</dbReference>
<dbReference type="GO" id="GO:0042597">
    <property type="term" value="C:periplasmic space"/>
    <property type="evidence" value="ECO:0007669"/>
    <property type="project" value="UniProtKB-SubCell"/>
</dbReference>
<dbReference type="GO" id="GO:0046872">
    <property type="term" value="F:metal ion binding"/>
    <property type="evidence" value="ECO:0007669"/>
    <property type="project" value="UniProtKB-KW"/>
</dbReference>
<dbReference type="GO" id="GO:0043546">
    <property type="term" value="F:molybdopterin cofactor binding"/>
    <property type="evidence" value="ECO:0007669"/>
    <property type="project" value="UniProtKB-UniRule"/>
</dbReference>
<dbReference type="GO" id="GO:0016672">
    <property type="term" value="F:oxidoreductase activity, acting on a sulfur group of donors, quinone or similar compound as acceptor"/>
    <property type="evidence" value="ECO:0007669"/>
    <property type="project" value="UniProtKB-UniRule"/>
</dbReference>
<dbReference type="GO" id="GO:0030091">
    <property type="term" value="P:protein repair"/>
    <property type="evidence" value="ECO:0007669"/>
    <property type="project" value="UniProtKB-UniRule"/>
</dbReference>
<dbReference type="CDD" id="cd02107">
    <property type="entry name" value="YedY_like_Moco"/>
    <property type="match status" value="1"/>
</dbReference>
<dbReference type="FunFam" id="3.90.420.10:FF:000001">
    <property type="entry name" value="Protein-methionine-sulfoxide reductase catalytic subunit MsrP"/>
    <property type="match status" value="1"/>
</dbReference>
<dbReference type="Gene3D" id="3.90.420.10">
    <property type="entry name" value="Oxidoreductase, molybdopterin-binding domain"/>
    <property type="match status" value="1"/>
</dbReference>
<dbReference type="HAMAP" id="MF_01206">
    <property type="entry name" value="MsrP"/>
    <property type="match status" value="1"/>
</dbReference>
<dbReference type="InterPro" id="IPR022867">
    <property type="entry name" value="MsrP"/>
</dbReference>
<dbReference type="InterPro" id="IPR000572">
    <property type="entry name" value="OxRdtase_Mopterin-bd_dom"/>
</dbReference>
<dbReference type="InterPro" id="IPR036374">
    <property type="entry name" value="OxRdtase_Mopterin-bd_sf"/>
</dbReference>
<dbReference type="InterPro" id="IPR006311">
    <property type="entry name" value="TAT_signal"/>
</dbReference>
<dbReference type="NCBIfam" id="NF003767">
    <property type="entry name" value="PRK05363.1"/>
    <property type="match status" value="1"/>
</dbReference>
<dbReference type="PANTHER" id="PTHR43032">
    <property type="entry name" value="PROTEIN-METHIONINE-SULFOXIDE REDUCTASE"/>
    <property type="match status" value="1"/>
</dbReference>
<dbReference type="PANTHER" id="PTHR43032:SF3">
    <property type="entry name" value="PROTEIN-METHIONINE-SULFOXIDE REDUCTASE CATALYTIC SUBUNIT MSRP"/>
    <property type="match status" value="1"/>
</dbReference>
<dbReference type="Pfam" id="PF00174">
    <property type="entry name" value="Oxidored_molyb"/>
    <property type="match status" value="1"/>
</dbReference>
<dbReference type="SUPFAM" id="SSF56524">
    <property type="entry name" value="Oxidoreductase molybdopterin-binding domain"/>
    <property type="match status" value="1"/>
</dbReference>
<dbReference type="PROSITE" id="PS51318">
    <property type="entry name" value="TAT"/>
    <property type="match status" value="1"/>
</dbReference>
<protein>
    <recommendedName>
        <fullName evidence="1">Protein-methionine-sulfoxide reductase catalytic subunit MsrP</fullName>
        <ecNumber evidence="1">1.8.5.-</ecNumber>
    </recommendedName>
</protein>
<evidence type="ECO:0000255" key="1">
    <source>
        <dbReference type="HAMAP-Rule" id="MF_01206"/>
    </source>
</evidence>
<comment type="function">
    <text evidence="1">Part of the MsrPQ system that repairs oxidized periplasmic proteins containing methionine sulfoxide residues (Met-O), using respiratory chain electrons. Thus protects these proteins from oxidative-stress damage caused by reactive species of oxygen and chlorine generated by the host defense mechanisms. MsrPQ is essential for the maintenance of envelope integrity under bleach stress, rescuing a wide series of structurally unrelated periplasmic proteins from methionine oxidation, including the primary periplasmic chaperone SurA and the lipoprotein Pal. The catalytic subunit MsrP is non-stereospecific, being able to reduce both (R-) and (S-) diastereoisomers of methionine sulfoxide.</text>
</comment>
<comment type="catalytic activity">
    <reaction evidence="1">
        <text>L-methionyl-[protein] + a quinone + H2O = L-methionyl-(S)-S-oxide-[protein] + a quinol</text>
        <dbReference type="Rhea" id="RHEA:51292"/>
        <dbReference type="Rhea" id="RHEA-COMP:12313"/>
        <dbReference type="Rhea" id="RHEA-COMP:12315"/>
        <dbReference type="ChEBI" id="CHEBI:15377"/>
        <dbReference type="ChEBI" id="CHEBI:16044"/>
        <dbReference type="ChEBI" id="CHEBI:24646"/>
        <dbReference type="ChEBI" id="CHEBI:44120"/>
        <dbReference type="ChEBI" id="CHEBI:132124"/>
    </reaction>
</comment>
<comment type="catalytic activity">
    <reaction evidence="1">
        <text>L-methionyl-[protein] + a quinone + H2O = L-methionyl-(R)-S-oxide-[protein] + a quinol</text>
        <dbReference type="Rhea" id="RHEA:51296"/>
        <dbReference type="Rhea" id="RHEA-COMP:12313"/>
        <dbReference type="Rhea" id="RHEA-COMP:12314"/>
        <dbReference type="ChEBI" id="CHEBI:15377"/>
        <dbReference type="ChEBI" id="CHEBI:16044"/>
        <dbReference type="ChEBI" id="CHEBI:24646"/>
        <dbReference type="ChEBI" id="CHEBI:45764"/>
        <dbReference type="ChEBI" id="CHEBI:132124"/>
    </reaction>
</comment>
<comment type="cofactor">
    <cofactor evidence="1">
        <name>Mo-molybdopterin</name>
        <dbReference type="ChEBI" id="CHEBI:71302"/>
    </cofactor>
    <text evidence="1">Binds 1 Mo-molybdopterin (Mo-MPT) cofactor per subunit.</text>
</comment>
<comment type="subunit">
    <text evidence="1">Heterodimer of a catalytic subunit (MsrP) and a heme-binding subunit (MsrQ).</text>
</comment>
<comment type="subcellular location">
    <subcellularLocation>
        <location evidence="1">Periplasm</location>
    </subcellularLocation>
    <text evidence="1">Is attached to the inner membrane when interacting with the MsrQ subunit.</text>
</comment>
<comment type="PTM">
    <text evidence="1">Predicted to be exported by the Tat system. The position of the signal peptide cleavage has not been experimentally proven.</text>
</comment>
<comment type="similarity">
    <text evidence="1">Belongs to the MsrP family.</text>
</comment>
<organism>
    <name type="scientific">Escherichia coli O139:H28 (strain E24377A / ETEC)</name>
    <dbReference type="NCBI Taxonomy" id="331111"/>
    <lineage>
        <taxon>Bacteria</taxon>
        <taxon>Pseudomonadati</taxon>
        <taxon>Pseudomonadota</taxon>
        <taxon>Gammaproteobacteria</taxon>
        <taxon>Enterobacterales</taxon>
        <taxon>Enterobacteriaceae</taxon>
        <taxon>Escherichia</taxon>
    </lineage>
</organism>
<gene>
    <name evidence="1" type="primary">msrP</name>
    <name type="ordered locus">EcE24377A_2202</name>
</gene>
<sequence length="334" mass="37425">MKKKQFLKESDVTAESVFFMKRRQVLKALGISAAALSLPHAAHADLLSWFKGNDRPPAPAGKPLEFSKPAAWQNNLPLTPVDKVSGYNNFYEFGLDKADPAANAGSLKTDPWTLKISGEVAKPLTLDHDDLTRRFPLEERIYRMRCVEAWSMVVPWIGFPLHKLLALAEPTSNAKYVAFETIYAPEQMPGQQDRFIGGGLKYPYVEGLRLDEAMHPLTLMTVGVYGKALPPQNGAPVRLIVPWKYGFKGIKSIVSIKLTRERPPTTWNLAAPDEYGFYANVNPHVDHPRWSQATERFIGSGGILDVQRQPTLLFNGYADQVASLYRGLDLRENF</sequence>
<feature type="signal peptide" description="Tat-type signal" evidence="1">
    <location>
        <begin position="1"/>
        <end position="44"/>
    </location>
</feature>
<feature type="chain" id="PRO_1000066155" description="Protein-methionine-sulfoxide reductase catalytic subunit MsrP" evidence="1">
    <location>
        <begin position="45"/>
        <end position="334"/>
    </location>
</feature>
<feature type="binding site" evidence="1">
    <location>
        <position position="88"/>
    </location>
    <ligand>
        <name>Mo-molybdopterin</name>
        <dbReference type="ChEBI" id="CHEBI:71302"/>
    </ligand>
</feature>
<feature type="binding site" evidence="1">
    <location>
        <begin position="91"/>
        <end position="92"/>
    </location>
    <ligand>
        <name>Mo-molybdopterin</name>
        <dbReference type="ChEBI" id="CHEBI:71302"/>
    </ligand>
</feature>
<feature type="binding site" evidence="1">
    <location>
        <position position="146"/>
    </location>
    <ligand>
        <name>Mo-molybdopterin</name>
        <dbReference type="ChEBI" id="CHEBI:71302"/>
    </ligand>
    <ligandPart>
        <name>Mo</name>
        <dbReference type="ChEBI" id="CHEBI:28685"/>
    </ligandPart>
</feature>
<feature type="binding site" evidence="1">
    <location>
        <position position="181"/>
    </location>
    <ligand>
        <name>Mo-molybdopterin</name>
        <dbReference type="ChEBI" id="CHEBI:71302"/>
    </ligand>
</feature>
<feature type="binding site" evidence="1">
    <location>
        <position position="233"/>
    </location>
    <ligand>
        <name>Mo-molybdopterin</name>
        <dbReference type="ChEBI" id="CHEBI:71302"/>
    </ligand>
</feature>
<feature type="binding site" evidence="1">
    <location>
        <position position="238"/>
    </location>
    <ligand>
        <name>Mo-molybdopterin</name>
        <dbReference type="ChEBI" id="CHEBI:71302"/>
    </ligand>
</feature>
<feature type="binding site" evidence="1">
    <location>
        <begin position="249"/>
        <end position="251"/>
    </location>
    <ligand>
        <name>Mo-molybdopterin</name>
        <dbReference type="ChEBI" id="CHEBI:71302"/>
    </ligand>
</feature>
<reference key="1">
    <citation type="journal article" date="2008" name="J. Bacteriol.">
        <title>The pangenome structure of Escherichia coli: comparative genomic analysis of E. coli commensal and pathogenic isolates.</title>
        <authorList>
            <person name="Rasko D.A."/>
            <person name="Rosovitz M.J."/>
            <person name="Myers G.S.A."/>
            <person name="Mongodin E.F."/>
            <person name="Fricke W.F."/>
            <person name="Gajer P."/>
            <person name="Crabtree J."/>
            <person name="Sebaihia M."/>
            <person name="Thomson N.R."/>
            <person name="Chaudhuri R."/>
            <person name="Henderson I.R."/>
            <person name="Sperandio V."/>
            <person name="Ravel J."/>
        </authorList>
    </citation>
    <scope>NUCLEOTIDE SEQUENCE [LARGE SCALE GENOMIC DNA]</scope>
    <source>
        <strain>E24377A / ETEC</strain>
    </source>
</reference>
<accession>A7ZN92</accession>